<gene>
    <name evidence="1" type="primary">rpsQ</name>
    <name type="ordered locus">ROP_61950</name>
</gene>
<proteinExistence type="inferred from homology"/>
<accession>C1B021</accession>
<keyword id="KW-0687">Ribonucleoprotein</keyword>
<keyword id="KW-0689">Ribosomal protein</keyword>
<keyword id="KW-0694">RNA-binding</keyword>
<keyword id="KW-0699">rRNA-binding</keyword>
<name>RS17_RHOOB</name>
<feature type="chain" id="PRO_1000166492" description="Small ribosomal subunit protein uS17">
    <location>
        <begin position="1"/>
        <end position="93"/>
    </location>
</feature>
<sequence>MSEEKAVSTEERGSRKVRTGYVVSDKMEKTIVVELEDRVKHPLYGKIIRRTSKVKAHDENGVAGIGDRVQLMETRPLSATKHWRLVEVLEKAK</sequence>
<reference key="1">
    <citation type="submission" date="2009-03" db="EMBL/GenBank/DDBJ databases">
        <title>Comparison of the complete genome sequences of Rhodococcus erythropolis PR4 and Rhodococcus opacus B4.</title>
        <authorList>
            <person name="Takarada H."/>
            <person name="Sekine M."/>
            <person name="Hosoyama A."/>
            <person name="Yamada R."/>
            <person name="Fujisawa T."/>
            <person name="Omata S."/>
            <person name="Shimizu A."/>
            <person name="Tsukatani N."/>
            <person name="Tanikawa S."/>
            <person name="Fujita N."/>
            <person name="Harayama S."/>
        </authorList>
    </citation>
    <scope>NUCLEOTIDE SEQUENCE [LARGE SCALE GENOMIC DNA]</scope>
    <source>
        <strain>B4</strain>
    </source>
</reference>
<protein>
    <recommendedName>
        <fullName evidence="1">Small ribosomal subunit protein uS17</fullName>
    </recommendedName>
    <alternativeName>
        <fullName evidence="2">30S ribosomal protein S17</fullName>
    </alternativeName>
</protein>
<organism>
    <name type="scientific">Rhodococcus opacus (strain B4)</name>
    <dbReference type="NCBI Taxonomy" id="632772"/>
    <lineage>
        <taxon>Bacteria</taxon>
        <taxon>Bacillati</taxon>
        <taxon>Actinomycetota</taxon>
        <taxon>Actinomycetes</taxon>
        <taxon>Mycobacteriales</taxon>
        <taxon>Nocardiaceae</taxon>
        <taxon>Rhodococcus</taxon>
    </lineage>
</organism>
<evidence type="ECO:0000255" key="1">
    <source>
        <dbReference type="HAMAP-Rule" id="MF_01345"/>
    </source>
</evidence>
<evidence type="ECO:0000305" key="2"/>
<dbReference type="EMBL" id="AP011115">
    <property type="protein sequence ID" value="BAH54442.1"/>
    <property type="molecule type" value="Genomic_DNA"/>
</dbReference>
<dbReference type="RefSeq" id="WP_005239638.1">
    <property type="nucleotide sequence ID" value="NC_012522.1"/>
</dbReference>
<dbReference type="SMR" id="C1B021"/>
<dbReference type="STRING" id="632772.ROP_61950"/>
<dbReference type="GeneID" id="69890525"/>
<dbReference type="KEGG" id="rop:ROP_61950"/>
<dbReference type="PATRIC" id="fig|632772.20.peg.6471"/>
<dbReference type="HOGENOM" id="CLU_073626_1_0_11"/>
<dbReference type="OrthoDB" id="9811714at2"/>
<dbReference type="Proteomes" id="UP000002212">
    <property type="component" value="Chromosome"/>
</dbReference>
<dbReference type="GO" id="GO:0022627">
    <property type="term" value="C:cytosolic small ribosomal subunit"/>
    <property type="evidence" value="ECO:0007669"/>
    <property type="project" value="TreeGrafter"/>
</dbReference>
<dbReference type="GO" id="GO:0019843">
    <property type="term" value="F:rRNA binding"/>
    <property type="evidence" value="ECO:0007669"/>
    <property type="project" value="UniProtKB-UniRule"/>
</dbReference>
<dbReference type="GO" id="GO:0003735">
    <property type="term" value="F:structural constituent of ribosome"/>
    <property type="evidence" value="ECO:0007669"/>
    <property type="project" value="InterPro"/>
</dbReference>
<dbReference type="GO" id="GO:0006412">
    <property type="term" value="P:translation"/>
    <property type="evidence" value="ECO:0007669"/>
    <property type="project" value="UniProtKB-UniRule"/>
</dbReference>
<dbReference type="CDD" id="cd00364">
    <property type="entry name" value="Ribosomal_uS17"/>
    <property type="match status" value="1"/>
</dbReference>
<dbReference type="FunFam" id="2.40.50.140:FF:000026">
    <property type="entry name" value="30S ribosomal protein S17"/>
    <property type="match status" value="1"/>
</dbReference>
<dbReference type="Gene3D" id="2.40.50.140">
    <property type="entry name" value="Nucleic acid-binding proteins"/>
    <property type="match status" value="1"/>
</dbReference>
<dbReference type="HAMAP" id="MF_01345_B">
    <property type="entry name" value="Ribosomal_uS17_B"/>
    <property type="match status" value="1"/>
</dbReference>
<dbReference type="InterPro" id="IPR012340">
    <property type="entry name" value="NA-bd_OB-fold"/>
</dbReference>
<dbReference type="InterPro" id="IPR000266">
    <property type="entry name" value="Ribosomal_uS17"/>
</dbReference>
<dbReference type="InterPro" id="IPR019984">
    <property type="entry name" value="Ribosomal_uS17_bact/chlr"/>
</dbReference>
<dbReference type="InterPro" id="IPR019979">
    <property type="entry name" value="Ribosomal_uS17_CS"/>
</dbReference>
<dbReference type="NCBIfam" id="NF004123">
    <property type="entry name" value="PRK05610.1"/>
    <property type="match status" value="1"/>
</dbReference>
<dbReference type="NCBIfam" id="TIGR03635">
    <property type="entry name" value="uS17_bact"/>
    <property type="match status" value="1"/>
</dbReference>
<dbReference type="PANTHER" id="PTHR10744">
    <property type="entry name" value="40S RIBOSOMAL PROTEIN S11 FAMILY MEMBER"/>
    <property type="match status" value="1"/>
</dbReference>
<dbReference type="PANTHER" id="PTHR10744:SF1">
    <property type="entry name" value="SMALL RIBOSOMAL SUBUNIT PROTEIN US17M"/>
    <property type="match status" value="1"/>
</dbReference>
<dbReference type="Pfam" id="PF00366">
    <property type="entry name" value="Ribosomal_S17"/>
    <property type="match status" value="1"/>
</dbReference>
<dbReference type="PRINTS" id="PR00973">
    <property type="entry name" value="RIBOSOMALS17"/>
</dbReference>
<dbReference type="SUPFAM" id="SSF50249">
    <property type="entry name" value="Nucleic acid-binding proteins"/>
    <property type="match status" value="1"/>
</dbReference>
<dbReference type="PROSITE" id="PS00056">
    <property type="entry name" value="RIBOSOMAL_S17"/>
    <property type="match status" value="1"/>
</dbReference>
<comment type="function">
    <text evidence="1">One of the primary rRNA binding proteins, it binds specifically to the 5'-end of 16S ribosomal RNA.</text>
</comment>
<comment type="subunit">
    <text evidence="1">Part of the 30S ribosomal subunit.</text>
</comment>
<comment type="similarity">
    <text evidence="1">Belongs to the universal ribosomal protein uS17 family.</text>
</comment>